<name>RL36_LEUMM</name>
<gene>
    <name evidence="1" type="primary">rpmJ</name>
    <name type="ordered locus">LEUM_0218</name>
</gene>
<reference key="1">
    <citation type="journal article" date="2006" name="Proc. Natl. Acad. Sci. U.S.A.">
        <title>Comparative genomics of the lactic acid bacteria.</title>
        <authorList>
            <person name="Makarova K.S."/>
            <person name="Slesarev A."/>
            <person name="Wolf Y.I."/>
            <person name="Sorokin A."/>
            <person name="Mirkin B."/>
            <person name="Koonin E.V."/>
            <person name="Pavlov A."/>
            <person name="Pavlova N."/>
            <person name="Karamychev V."/>
            <person name="Polouchine N."/>
            <person name="Shakhova V."/>
            <person name="Grigoriev I."/>
            <person name="Lou Y."/>
            <person name="Rohksar D."/>
            <person name="Lucas S."/>
            <person name="Huang K."/>
            <person name="Goodstein D.M."/>
            <person name="Hawkins T."/>
            <person name="Plengvidhya V."/>
            <person name="Welker D."/>
            <person name="Hughes J."/>
            <person name="Goh Y."/>
            <person name="Benson A."/>
            <person name="Baldwin K."/>
            <person name="Lee J.-H."/>
            <person name="Diaz-Muniz I."/>
            <person name="Dosti B."/>
            <person name="Smeianov V."/>
            <person name="Wechter W."/>
            <person name="Barabote R."/>
            <person name="Lorca G."/>
            <person name="Altermann E."/>
            <person name="Barrangou R."/>
            <person name="Ganesan B."/>
            <person name="Xie Y."/>
            <person name="Rawsthorne H."/>
            <person name="Tamir D."/>
            <person name="Parker C."/>
            <person name="Breidt F."/>
            <person name="Broadbent J.R."/>
            <person name="Hutkins R."/>
            <person name="O'Sullivan D."/>
            <person name="Steele J."/>
            <person name="Unlu G."/>
            <person name="Saier M.H. Jr."/>
            <person name="Klaenhammer T."/>
            <person name="Richardson P."/>
            <person name="Kozyavkin S."/>
            <person name="Weimer B.C."/>
            <person name="Mills D.A."/>
        </authorList>
    </citation>
    <scope>NUCLEOTIDE SEQUENCE [LARGE SCALE GENOMIC DNA]</scope>
    <source>
        <strain>ATCC 8293 / DSM 20343 / BCRC 11652 / CCM 1803 / JCM 6124 / NCDO 523 / NBRC 100496 / NCIMB 8023 / NCTC 12954 / NRRL B-1118 / 37Y</strain>
    </source>
</reference>
<evidence type="ECO:0000255" key="1">
    <source>
        <dbReference type="HAMAP-Rule" id="MF_00251"/>
    </source>
</evidence>
<evidence type="ECO:0000305" key="2"/>
<accession>Q03ZM3</accession>
<organism>
    <name type="scientific">Leuconostoc mesenteroides subsp. mesenteroides (strain ATCC 8293 / DSM 20343 / BCRC 11652 / CCM 1803 / JCM 6124 / NCDO 523 / NBRC 100496 / NCIMB 8023 / NCTC 12954 / NRRL B-1118 / 37Y)</name>
    <dbReference type="NCBI Taxonomy" id="203120"/>
    <lineage>
        <taxon>Bacteria</taxon>
        <taxon>Bacillati</taxon>
        <taxon>Bacillota</taxon>
        <taxon>Bacilli</taxon>
        <taxon>Lactobacillales</taxon>
        <taxon>Lactobacillaceae</taxon>
        <taxon>Leuconostoc</taxon>
    </lineage>
</organism>
<sequence>MKVRPSVKKMCDACRVIKRNGRTMIICSANPKHKQRAGK</sequence>
<feature type="chain" id="PRO_0000302232" description="Large ribosomal subunit protein bL36">
    <location>
        <begin position="1"/>
        <end position="39"/>
    </location>
</feature>
<protein>
    <recommendedName>
        <fullName evidence="1">Large ribosomal subunit protein bL36</fullName>
    </recommendedName>
    <alternativeName>
        <fullName evidence="2">50S ribosomal protein L36</fullName>
    </alternativeName>
</protein>
<keyword id="KW-1185">Reference proteome</keyword>
<keyword id="KW-0687">Ribonucleoprotein</keyword>
<keyword id="KW-0689">Ribosomal protein</keyword>
<proteinExistence type="inferred from homology"/>
<comment type="similarity">
    <text evidence="1">Belongs to the bacterial ribosomal protein bL36 family.</text>
</comment>
<dbReference type="EMBL" id="CP000414">
    <property type="protein sequence ID" value="ABJ61349.1"/>
    <property type="molecule type" value="Genomic_DNA"/>
</dbReference>
<dbReference type="RefSeq" id="WP_002816013.1">
    <property type="nucleotide sequence ID" value="NC_008531.1"/>
</dbReference>
<dbReference type="SMR" id="Q03ZM3"/>
<dbReference type="EnsemblBacteria" id="ABJ61349">
    <property type="protein sequence ID" value="ABJ61349"/>
    <property type="gene ID" value="LEUM_0218"/>
</dbReference>
<dbReference type="GeneID" id="97504959"/>
<dbReference type="KEGG" id="lme:LEUM_0218"/>
<dbReference type="eggNOG" id="COG0257">
    <property type="taxonomic scope" value="Bacteria"/>
</dbReference>
<dbReference type="HOGENOM" id="CLU_135723_6_2_9"/>
<dbReference type="Proteomes" id="UP000000362">
    <property type="component" value="Chromosome"/>
</dbReference>
<dbReference type="GO" id="GO:0005737">
    <property type="term" value="C:cytoplasm"/>
    <property type="evidence" value="ECO:0007669"/>
    <property type="project" value="UniProtKB-ARBA"/>
</dbReference>
<dbReference type="GO" id="GO:1990904">
    <property type="term" value="C:ribonucleoprotein complex"/>
    <property type="evidence" value="ECO:0007669"/>
    <property type="project" value="UniProtKB-KW"/>
</dbReference>
<dbReference type="GO" id="GO:0005840">
    <property type="term" value="C:ribosome"/>
    <property type="evidence" value="ECO:0007669"/>
    <property type="project" value="UniProtKB-KW"/>
</dbReference>
<dbReference type="GO" id="GO:0003735">
    <property type="term" value="F:structural constituent of ribosome"/>
    <property type="evidence" value="ECO:0007669"/>
    <property type="project" value="InterPro"/>
</dbReference>
<dbReference type="GO" id="GO:0006412">
    <property type="term" value="P:translation"/>
    <property type="evidence" value="ECO:0007669"/>
    <property type="project" value="UniProtKB-UniRule"/>
</dbReference>
<dbReference type="HAMAP" id="MF_00251">
    <property type="entry name" value="Ribosomal_bL36"/>
    <property type="match status" value="1"/>
</dbReference>
<dbReference type="InterPro" id="IPR000473">
    <property type="entry name" value="Ribosomal_bL36"/>
</dbReference>
<dbReference type="InterPro" id="IPR035977">
    <property type="entry name" value="Ribosomal_bL36_sp"/>
</dbReference>
<dbReference type="NCBIfam" id="TIGR01022">
    <property type="entry name" value="rpmJ_bact"/>
    <property type="match status" value="1"/>
</dbReference>
<dbReference type="PANTHER" id="PTHR42888">
    <property type="entry name" value="50S RIBOSOMAL PROTEIN L36, CHLOROPLASTIC"/>
    <property type="match status" value="1"/>
</dbReference>
<dbReference type="PANTHER" id="PTHR42888:SF1">
    <property type="entry name" value="LARGE RIBOSOMAL SUBUNIT PROTEIN BL36C"/>
    <property type="match status" value="1"/>
</dbReference>
<dbReference type="Pfam" id="PF00444">
    <property type="entry name" value="Ribosomal_L36"/>
    <property type="match status" value="1"/>
</dbReference>
<dbReference type="SUPFAM" id="SSF57840">
    <property type="entry name" value="Ribosomal protein L36"/>
    <property type="match status" value="1"/>
</dbReference>